<protein>
    <recommendedName>
        <fullName evidence="1">UPF0391 membrane protein Maqu_2901</fullName>
    </recommendedName>
</protein>
<keyword id="KW-1003">Cell membrane</keyword>
<keyword id="KW-0472">Membrane</keyword>
<keyword id="KW-0812">Transmembrane</keyword>
<keyword id="KW-1133">Transmembrane helix</keyword>
<reference key="1">
    <citation type="journal article" date="2011" name="Appl. Environ. Microbiol.">
        <title>Genomic potential of Marinobacter aquaeolei, a biogeochemical 'opportunitroph'.</title>
        <authorList>
            <person name="Singer E."/>
            <person name="Webb E.A."/>
            <person name="Nelson W.C."/>
            <person name="Heidelberg J.F."/>
            <person name="Ivanova N."/>
            <person name="Pati A."/>
            <person name="Edwards K.J."/>
        </authorList>
    </citation>
    <scope>NUCLEOTIDE SEQUENCE [LARGE SCALE GENOMIC DNA]</scope>
    <source>
        <strain>ATCC 700491 / DSM 11845 / VT8</strain>
    </source>
</reference>
<dbReference type="EMBL" id="CP000514">
    <property type="protein sequence ID" value="ABM19975.1"/>
    <property type="molecule type" value="Genomic_DNA"/>
</dbReference>
<dbReference type="STRING" id="351348.Maqu_2901"/>
<dbReference type="KEGG" id="maq:Maqu_2901"/>
<dbReference type="eggNOG" id="COG5487">
    <property type="taxonomic scope" value="Bacteria"/>
</dbReference>
<dbReference type="HOGENOM" id="CLU_187346_1_0_6"/>
<dbReference type="Proteomes" id="UP000000998">
    <property type="component" value="Chromosome"/>
</dbReference>
<dbReference type="GO" id="GO:0005886">
    <property type="term" value="C:plasma membrane"/>
    <property type="evidence" value="ECO:0007669"/>
    <property type="project" value="UniProtKB-SubCell"/>
</dbReference>
<dbReference type="HAMAP" id="MF_01361">
    <property type="entry name" value="UPF0391"/>
    <property type="match status" value="1"/>
</dbReference>
<dbReference type="InterPro" id="IPR009760">
    <property type="entry name" value="DUF1328"/>
</dbReference>
<dbReference type="NCBIfam" id="NF010226">
    <property type="entry name" value="PRK13682.1-1"/>
    <property type="match status" value="1"/>
</dbReference>
<dbReference type="NCBIfam" id="NF010228">
    <property type="entry name" value="PRK13682.1-3"/>
    <property type="match status" value="1"/>
</dbReference>
<dbReference type="NCBIfam" id="NF010229">
    <property type="entry name" value="PRK13682.1-4"/>
    <property type="match status" value="1"/>
</dbReference>
<dbReference type="Pfam" id="PF07043">
    <property type="entry name" value="DUF1328"/>
    <property type="match status" value="1"/>
</dbReference>
<dbReference type="PIRSF" id="PIRSF036466">
    <property type="entry name" value="UCP036466"/>
    <property type="match status" value="1"/>
</dbReference>
<organism>
    <name type="scientific">Marinobacter nauticus (strain ATCC 700491 / DSM 11845 / VT8)</name>
    <name type="common">Marinobacter aquaeolei</name>
    <dbReference type="NCBI Taxonomy" id="351348"/>
    <lineage>
        <taxon>Bacteria</taxon>
        <taxon>Pseudomonadati</taxon>
        <taxon>Pseudomonadota</taxon>
        <taxon>Gammaproteobacteria</taxon>
        <taxon>Pseudomonadales</taxon>
        <taxon>Marinobacteraceae</taxon>
        <taxon>Marinobacter</taxon>
    </lineage>
</organism>
<feature type="chain" id="PRO_5000209213" description="UPF0391 membrane protein Maqu_2901">
    <location>
        <begin position="1"/>
        <end position="58"/>
    </location>
</feature>
<feature type="transmembrane region" description="Helical" evidence="1">
    <location>
        <begin position="4"/>
        <end position="24"/>
    </location>
</feature>
<feature type="transmembrane region" description="Helical" evidence="1">
    <location>
        <begin position="28"/>
        <end position="48"/>
    </location>
</feature>
<gene>
    <name type="ordered locus">Maqu_2901</name>
</gene>
<evidence type="ECO:0000255" key="1">
    <source>
        <dbReference type="HAMAP-Rule" id="MF_01361"/>
    </source>
</evidence>
<name>Y2901_MARN8</name>
<sequence>MLYWAIVCLVIAVIAGILGFGGIAGTAAGFAKILFFVFLVLLVVSLVVNALRGKGPKV</sequence>
<proteinExistence type="inferred from homology"/>
<accession>A1U4Q6</accession>
<comment type="subcellular location">
    <subcellularLocation>
        <location evidence="1">Cell membrane</location>
        <topology evidence="1">Multi-pass membrane protein</topology>
    </subcellularLocation>
</comment>
<comment type="similarity">
    <text evidence="1">Belongs to the UPF0391 family.</text>
</comment>